<feature type="chain" id="PRO_0000183150" description="Crossover junction endodeoxyribonuclease RuvC">
    <location>
        <begin position="1"/>
        <end position="174"/>
    </location>
</feature>
<feature type="active site" evidence="1">
    <location>
        <position position="8"/>
    </location>
</feature>
<feature type="active site" evidence="1">
    <location>
        <position position="69"/>
    </location>
</feature>
<feature type="active site" evidence="1">
    <location>
        <position position="141"/>
    </location>
</feature>
<feature type="binding site" evidence="1">
    <location>
        <position position="8"/>
    </location>
    <ligand>
        <name>Mg(2+)</name>
        <dbReference type="ChEBI" id="CHEBI:18420"/>
        <label>1</label>
    </ligand>
</feature>
<feature type="binding site" evidence="1">
    <location>
        <position position="69"/>
    </location>
    <ligand>
        <name>Mg(2+)</name>
        <dbReference type="ChEBI" id="CHEBI:18420"/>
        <label>2</label>
    </ligand>
</feature>
<feature type="binding site" evidence="1">
    <location>
        <position position="141"/>
    </location>
    <ligand>
        <name>Mg(2+)</name>
        <dbReference type="ChEBI" id="CHEBI:18420"/>
        <label>1</label>
    </ligand>
</feature>
<evidence type="ECO:0000255" key="1">
    <source>
        <dbReference type="HAMAP-Rule" id="MF_00034"/>
    </source>
</evidence>
<comment type="function">
    <text evidence="1">The RuvA-RuvB-RuvC complex processes Holliday junction (HJ) DNA during genetic recombination and DNA repair. Endonuclease that resolves HJ intermediates. Cleaves cruciform DNA by making single-stranded nicks across the HJ at symmetrical positions within the homologous arms, yielding a 5'-phosphate and a 3'-hydroxyl group; requires a central core of homology in the junction. The consensus cleavage sequence is 5'-(A/T)TT(C/G)-3'. Cleavage occurs on the 3'-side of the TT dinucleotide at the point of strand exchange. HJ branch migration catalyzed by RuvA-RuvB allows RuvC to scan DNA until it finds its consensus sequence, where it cleaves and resolves the cruciform DNA.</text>
</comment>
<comment type="catalytic activity">
    <reaction evidence="1">
        <text>Endonucleolytic cleavage at a junction such as a reciprocal single-stranded crossover between two homologous DNA duplexes (Holliday junction).</text>
        <dbReference type="EC" id="3.1.21.10"/>
    </reaction>
</comment>
<comment type="cofactor">
    <cofactor evidence="1">
        <name>Mg(2+)</name>
        <dbReference type="ChEBI" id="CHEBI:18420"/>
    </cofactor>
    <text evidence="1">Binds 2 Mg(2+) ion per subunit.</text>
</comment>
<comment type="subunit">
    <text evidence="1">Homodimer which binds Holliday junction (HJ) DNA. The HJ becomes 2-fold symmetrical on binding to RuvC with unstacked arms; it has a different conformation from HJ DNA in complex with RuvA. In the full resolvosome a probable DNA-RuvA(4)-RuvB(12)-RuvC(2) complex forms which resolves the HJ.</text>
</comment>
<comment type="subcellular location">
    <subcellularLocation>
        <location evidence="1">Cytoplasm</location>
    </subcellularLocation>
</comment>
<comment type="similarity">
    <text evidence="1">Belongs to the RuvC family.</text>
</comment>
<keyword id="KW-0963">Cytoplasm</keyword>
<keyword id="KW-0227">DNA damage</keyword>
<keyword id="KW-0233">DNA recombination</keyword>
<keyword id="KW-0234">DNA repair</keyword>
<keyword id="KW-0238">DNA-binding</keyword>
<keyword id="KW-0255">Endonuclease</keyword>
<keyword id="KW-0378">Hydrolase</keyword>
<keyword id="KW-0460">Magnesium</keyword>
<keyword id="KW-0479">Metal-binding</keyword>
<keyword id="KW-0540">Nuclease</keyword>
<dbReference type="EC" id="3.1.21.10" evidence="1"/>
<dbReference type="EMBL" id="AE008923">
    <property type="protein sequence ID" value="AAM37994.1"/>
    <property type="molecule type" value="Genomic_DNA"/>
</dbReference>
<dbReference type="RefSeq" id="WP_003482580.1">
    <property type="nucleotide sequence ID" value="NC_003919.1"/>
</dbReference>
<dbReference type="SMR" id="Q8PHU9"/>
<dbReference type="GeneID" id="66912215"/>
<dbReference type="KEGG" id="xac:XAC3150"/>
<dbReference type="eggNOG" id="COG0817">
    <property type="taxonomic scope" value="Bacteria"/>
</dbReference>
<dbReference type="HOGENOM" id="CLU_091257_2_1_6"/>
<dbReference type="Proteomes" id="UP000000576">
    <property type="component" value="Chromosome"/>
</dbReference>
<dbReference type="GO" id="GO:0005737">
    <property type="term" value="C:cytoplasm"/>
    <property type="evidence" value="ECO:0007669"/>
    <property type="project" value="UniProtKB-SubCell"/>
</dbReference>
<dbReference type="GO" id="GO:0048476">
    <property type="term" value="C:Holliday junction resolvase complex"/>
    <property type="evidence" value="ECO:0007669"/>
    <property type="project" value="UniProtKB-UniRule"/>
</dbReference>
<dbReference type="GO" id="GO:0008821">
    <property type="term" value="F:crossover junction DNA endonuclease activity"/>
    <property type="evidence" value="ECO:0007669"/>
    <property type="project" value="UniProtKB-UniRule"/>
</dbReference>
<dbReference type="GO" id="GO:0003677">
    <property type="term" value="F:DNA binding"/>
    <property type="evidence" value="ECO:0007669"/>
    <property type="project" value="UniProtKB-KW"/>
</dbReference>
<dbReference type="GO" id="GO:0000287">
    <property type="term" value="F:magnesium ion binding"/>
    <property type="evidence" value="ECO:0007669"/>
    <property type="project" value="UniProtKB-UniRule"/>
</dbReference>
<dbReference type="GO" id="GO:0006310">
    <property type="term" value="P:DNA recombination"/>
    <property type="evidence" value="ECO:0007669"/>
    <property type="project" value="UniProtKB-UniRule"/>
</dbReference>
<dbReference type="GO" id="GO:0006281">
    <property type="term" value="P:DNA repair"/>
    <property type="evidence" value="ECO:0007669"/>
    <property type="project" value="UniProtKB-UniRule"/>
</dbReference>
<dbReference type="CDD" id="cd16962">
    <property type="entry name" value="RuvC"/>
    <property type="match status" value="1"/>
</dbReference>
<dbReference type="FunFam" id="3.30.420.10:FF:000002">
    <property type="entry name" value="Crossover junction endodeoxyribonuclease RuvC"/>
    <property type="match status" value="1"/>
</dbReference>
<dbReference type="Gene3D" id="3.30.420.10">
    <property type="entry name" value="Ribonuclease H-like superfamily/Ribonuclease H"/>
    <property type="match status" value="1"/>
</dbReference>
<dbReference type="HAMAP" id="MF_00034">
    <property type="entry name" value="RuvC"/>
    <property type="match status" value="1"/>
</dbReference>
<dbReference type="InterPro" id="IPR012337">
    <property type="entry name" value="RNaseH-like_sf"/>
</dbReference>
<dbReference type="InterPro" id="IPR036397">
    <property type="entry name" value="RNaseH_sf"/>
</dbReference>
<dbReference type="InterPro" id="IPR020563">
    <property type="entry name" value="X-over_junc_endoDNase_Mg_BS"/>
</dbReference>
<dbReference type="InterPro" id="IPR002176">
    <property type="entry name" value="X-over_junc_endoDNase_RuvC"/>
</dbReference>
<dbReference type="NCBIfam" id="TIGR00228">
    <property type="entry name" value="ruvC"/>
    <property type="match status" value="1"/>
</dbReference>
<dbReference type="PANTHER" id="PTHR30194">
    <property type="entry name" value="CROSSOVER JUNCTION ENDODEOXYRIBONUCLEASE RUVC"/>
    <property type="match status" value="1"/>
</dbReference>
<dbReference type="PANTHER" id="PTHR30194:SF3">
    <property type="entry name" value="CROSSOVER JUNCTION ENDODEOXYRIBONUCLEASE RUVC"/>
    <property type="match status" value="1"/>
</dbReference>
<dbReference type="Pfam" id="PF02075">
    <property type="entry name" value="RuvC"/>
    <property type="match status" value="1"/>
</dbReference>
<dbReference type="PRINTS" id="PR00696">
    <property type="entry name" value="RSOLVASERUVC"/>
</dbReference>
<dbReference type="SUPFAM" id="SSF53098">
    <property type="entry name" value="Ribonuclease H-like"/>
    <property type="match status" value="1"/>
</dbReference>
<dbReference type="PROSITE" id="PS01321">
    <property type="entry name" value="RUVC"/>
    <property type="match status" value="1"/>
</dbReference>
<sequence length="174" mass="18732">MTRILGIDPGSQRTGIGIIDIDEGGRSRHVHHAPLMLLGEGDFSQRLKRLLQGLGELIEIYRPDEVAIEKVFMGKSAASALKLGHARGAAICAVVMRDLPVHEYAAKEIKLALVGKGGADKVQVQHMVGIMLNLNGKLQPDAADALAVAITHAHVRATAQRLGVNTQQAWSRKK</sequence>
<organism>
    <name type="scientific">Xanthomonas axonopodis pv. citri (strain 306)</name>
    <dbReference type="NCBI Taxonomy" id="190486"/>
    <lineage>
        <taxon>Bacteria</taxon>
        <taxon>Pseudomonadati</taxon>
        <taxon>Pseudomonadota</taxon>
        <taxon>Gammaproteobacteria</taxon>
        <taxon>Lysobacterales</taxon>
        <taxon>Lysobacteraceae</taxon>
        <taxon>Xanthomonas</taxon>
    </lineage>
</organism>
<name>RUVC_XANAC</name>
<gene>
    <name evidence="1" type="primary">ruvC</name>
    <name type="ordered locus">XAC3150</name>
</gene>
<protein>
    <recommendedName>
        <fullName evidence="1">Crossover junction endodeoxyribonuclease RuvC</fullName>
        <ecNumber evidence="1">3.1.21.10</ecNumber>
    </recommendedName>
    <alternativeName>
        <fullName evidence="1">Holliday junction nuclease RuvC</fullName>
    </alternativeName>
    <alternativeName>
        <fullName evidence="1">Holliday junction resolvase RuvC</fullName>
    </alternativeName>
</protein>
<proteinExistence type="inferred from homology"/>
<accession>Q8PHU9</accession>
<reference key="1">
    <citation type="journal article" date="2002" name="Nature">
        <title>Comparison of the genomes of two Xanthomonas pathogens with differing host specificities.</title>
        <authorList>
            <person name="da Silva A.C.R."/>
            <person name="Ferro J.A."/>
            <person name="Reinach F.C."/>
            <person name="Farah C.S."/>
            <person name="Furlan L.R."/>
            <person name="Quaggio R.B."/>
            <person name="Monteiro-Vitorello C.B."/>
            <person name="Van Sluys M.A."/>
            <person name="Almeida N.F. Jr."/>
            <person name="Alves L.M.C."/>
            <person name="do Amaral A.M."/>
            <person name="Bertolini M.C."/>
            <person name="Camargo L.E.A."/>
            <person name="Camarotte G."/>
            <person name="Cannavan F."/>
            <person name="Cardozo J."/>
            <person name="Chambergo F."/>
            <person name="Ciapina L.P."/>
            <person name="Cicarelli R.M.B."/>
            <person name="Coutinho L.L."/>
            <person name="Cursino-Santos J.R."/>
            <person name="El-Dorry H."/>
            <person name="Faria J.B."/>
            <person name="Ferreira A.J.S."/>
            <person name="Ferreira R.C.C."/>
            <person name="Ferro M.I.T."/>
            <person name="Formighieri E.F."/>
            <person name="Franco M.C."/>
            <person name="Greggio C.C."/>
            <person name="Gruber A."/>
            <person name="Katsuyama A.M."/>
            <person name="Kishi L.T."/>
            <person name="Leite R.P."/>
            <person name="Lemos E.G.M."/>
            <person name="Lemos M.V.F."/>
            <person name="Locali E.C."/>
            <person name="Machado M.A."/>
            <person name="Madeira A.M.B.N."/>
            <person name="Martinez-Rossi N.M."/>
            <person name="Martins E.C."/>
            <person name="Meidanis J."/>
            <person name="Menck C.F.M."/>
            <person name="Miyaki C.Y."/>
            <person name="Moon D.H."/>
            <person name="Moreira L.M."/>
            <person name="Novo M.T.M."/>
            <person name="Okura V.K."/>
            <person name="Oliveira M.C."/>
            <person name="Oliveira V.R."/>
            <person name="Pereira H.A."/>
            <person name="Rossi A."/>
            <person name="Sena J.A.D."/>
            <person name="Silva C."/>
            <person name="de Souza R.F."/>
            <person name="Spinola L.A.F."/>
            <person name="Takita M.A."/>
            <person name="Tamura R.E."/>
            <person name="Teixeira E.C."/>
            <person name="Tezza R.I.D."/>
            <person name="Trindade dos Santos M."/>
            <person name="Truffi D."/>
            <person name="Tsai S.M."/>
            <person name="White F.F."/>
            <person name="Setubal J.C."/>
            <person name="Kitajima J.P."/>
        </authorList>
    </citation>
    <scope>NUCLEOTIDE SEQUENCE [LARGE SCALE GENOMIC DNA]</scope>
    <source>
        <strain>306</strain>
    </source>
</reference>